<dbReference type="EC" id="3.4.25.2" evidence="1"/>
<dbReference type="EMBL" id="AE008691">
    <property type="protein sequence ID" value="AAM24670.1"/>
    <property type="molecule type" value="Genomic_DNA"/>
</dbReference>
<dbReference type="RefSeq" id="WP_011025718.1">
    <property type="nucleotide sequence ID" value="NZ_JANUCV010000001.1"/>
</dbReference>
<dbReference type="SMR" id="Q8R9Y2"/>
<dbReference type="STRING" id="273068.TTE1448"/>
<dbReference type="MEROPS" id="T01.007"/>
<dbReference type="KEGG" id="tte:TTE1448"/>
<dbReference type="eggNOG" id="COG5405">
    <property type="taxonomic scope" value="Bacteria"/>
</dbReference>
<dbReference type="HOGENOM" id="CLU_093872_1_1_9"/>
<dbReference type="OrthoDB" id="9804884at2"/>
<dbReference type="Proteomes" id="UP000000555">
    <property type="component" value="Chromosome"/>
</dbReference>
<dbReference type="GO" id="GO:0009376">
    <property type="term" value="C:HslUV protease complex"/>
    <property type="evidence" value="ECO:0007669"/>
    <property type="project" value="UniProtKB-UniRule"/>
</dbReference>
<dbReference type="GO" id="GO:0005839">
    <property type="term" value="C:proteasome core complex"/>
    <property type="evidence" value="ECO:0007669"/>
    <property type="project" value="InterPro"/>
</dbReference>
<dbReference type="GO" id="GO:0046872">
    <property type="term" value="F:metal ion binding"/>
    <property type="evidence" value="ECO:0007669"/>
    <property type="project" value="UniProtKB-KW"/>
</dbReference>
<dbReference type="GO" id="GO:0004298">
    <property type="term" value="F:threonine-type endopeptidase activity"/>
    <property type="evidence" value="ECO:0007669"/>
    <property type="project" value="UniProtKB-KW"/>
</dbReference>
<dbReference type="GO" id="GO:0051603">
    <property type="term" value="P:proteolysis involved in protein catabolic process"/>
    <property type="evidence" value="ECO:0007669"/>
    <property type="project" value="InterPro"/>
</dbReference>
<dbReference type="CDD" id="cd01913">
    <property type="entry name" value="protease_HslV"/>
    <property type="match status" value="1"/>
</dbReference>
<dbReference type="Gene3D" id="3.60.20.10">
    <property type="entry name" value="Glutamine Phosphoribosylpyrophosphate, subunit 1, domain 1"/>
    <property type="match status" value="1"/>
</dbReference>
<dbReference type="HAMAP" id="MF_00248">
    <property type="entry name" value="HslV"/>
    <property type="match status" value="1"/>
</dbReference>
<dbReference type="InterPro" id="IPR022281">
    <property type="entry name" value="ATP-dep_Prtase_HsIV_su"/>
</dbReference>
<dbReference type="InterPro" id="IPR029055">
    <property type="entry name" value="Ntn_hydrolases_N"/>
</dbReference>
<dbReference type="InterPro" id="IPR001353">
    <property type="entry name" value="Proteasome_sua/b"/>
</dbReference>
<dbReference type="InterPro" id="IPR023333">
    <property type="entry name" value="Proteasome_suB-type"/>
</dbReference>
<dbReference type="NCBIfam" id="TIGR03692">
    <property type="entry name" value="ATP_dep_HslV"/>
    <property type="match status" value="1"/>
</dbReference>
<dbReference type="NCBIfam" id="NF003964">
    <property type="entry name" value="PRK05456.1"/>
    <property type="match status" value="1"/>
</dbReference>
<dbReference type="PANTHER" id="PTHR32194:SF0">
    <property type="entry name" value="ATP-DEPENDENT PROTEASE SUBUNIT HSLV"/>
    <property type="match status" value="1"/>
</dbReference>
<dbReference type="PANTHER" id="PTHR32194">
    <property type="entry name" value="METALLOPROTEASE TLDD"/>
    <property type="match status" value="1"/>
</dbReference>
<dbReference type="Pfam" id="PF00227">
    <property type="entry name" value="Proteasome"/>
    <property type="match status" value="1"/>
</dbReference>
<dbReference type="PIRSF" id="PIRSF039093">
    <property type="entry name" value="HslV"/>
    <property type="match status" value="1"/>
</dbReference>
<dbReference type="SUPFAM" id="SSF56235">
    <property type="entry name" value="N-terminal nucleophile aminohydrolases (Ntn hydrolases)"/>
    <property type="match status" value="1"/>
</dbReference>
<dbReference type="PROSITE" id="PS51476">
    <property type="entry name" value="PROTEASOME_BETA_2"/>
    <property type="match status" value="1"/>
</dbReference>
<reference key="1">
    <citation type="journal article" date="2002" name="Genome Res.">
        <title>A complete sequence of the T. tengcongensis genome.</title>
        <authorList>
            <person name="Bao Q."/>
            <person name="Tian Y."/>
            <person name="Li W."/>
            <person name="Xu Z."/>
            <person name="Xuan Z."/>
            <person name="Hu S."/>
            <person name="Dong W."/>
            <person name="Yang J."/>
            <person name="Chen Y."/>
            <person name="Xue Y."/>
            <person name="Xu Y."/>
            <person name="Lai X."/>
            <person name="Huang L."/>
            <person name="Dong X."/>
            <person name="Ma Y."/>
            <person name="Ling L."/>
            <person name="Tan H."/>
            <person name="Chen R."/>
            <person name="Wang J."/>
            <person name="Yu J."/>
            <person name="Yang H."/>
        </authorList>
    </citation>
    <scope>NUCLEOTIDE SEQUENCE [LARGE SCALE GENOMIC DNA]</scope>
    <source>
        <strain>DSM 15242 / JCM 11007 / NBRC 100824 / MB4</strain>
    </source>
</reference>
<accession>Q8R9Y2</accession>
<protein>
    <recommendedName>
        <fullName evidence="1">ATP-dependent protease subunit HslV</fullName>
        <ecNumber evidence="1">3.4.25.2</ecNumber>
    </recommendedName>
</protein>
<name>HSLV_CALS4</name>
<feature type="chain" id="PRO_0000148155" description="ATP-dependent protease subunit HslV">
    <location>
        <begin position="1"/>
        <end position="176"/>
    </location>
</feature>
<feature type="active site" evidence="1">
    <location>
        <position position="5"/>
    </location>
</feature>
<feature type="binding site" evidence="1">
    <location>
        <position position="161"/>
    </location>
    <ligand>
        <name>Na(+)</name>
        <dbReference type="ChEBI" id="CHEBI:29101"/>
    </ligand>
</feature>
<feature type="binding site" evidence="1">
    <location>
        <position position="164"/>
    </location>
    <ligand>
        <name>Na(+)</name>
        <dbReference type="ChEBI" id="CHEBI:29101"/>
    </ligand>
</feature>
<feature type="binding site" evidence="1">
    <location>
        <position position="167"/>
    </location>
    <ligand>
        <name>Na(+)</name>
        <dbReference type="ChEBI" id="CHEBI:29101"/>
    </ligand>
</feature>
<sequence>MFRGTTIVAVRRGDRVSVAGDGQVTFGDSTILKHGAKKIRRLYNGEVIVGFAGSVADAMTLSQKFEEKLEQYGGNLKRAAVELAQEWRKDKILRKLEALLIAADKKDTLLISGTGEVIEPDEDVIGIGSGGNYAMAAALALRYNTDLDTEEIARKALEIASKICVYTNNNITVETL</sequence>
<organism>
    <name type="scientific">Caldanaerobacter subterraneus subsp. tengcongensis (strain DSM 15242 / JCM 11007 / NBRC 100824 / MB4)</name>
    <name type="common">Thermoanaerobacter tengcongensis</name>
    <dbReference type="NCBI Taxonomy" id="273068"/>
    <lineage>
        <taxon>Bacteria</taxon>
        <taxon>Bacillati</taxon>
        <taxon>Bacillota</taxon>
        <taxon>Clostridia</taxon>
        <taxon>Thermoanaerobacterales</taxon>
        <taxon>Thermoanaerobacteraceae</taxon>
        <taxon>Caldanaerobacter</taxon>
    </lineage>
</organism>
<proteinExistence type="inferred from homology"/>
<comment type="function">
    <text evidence="1">Protease subunit of a proteasome-like degradation complex believed to be a general protein degrading machinery.</text>
</comment>
<comment type="catalytic activity">
    <reaction evidence="1">
        <text>ATP-dependent cleavage of peptide bonds with broad specificity.</text>
        <dbReference type="EC" id="3.4.25.2"/>
    </reaction>
</comment>
<comment type="activity regulation">
    <text evidence="1">Allosterically activated by HslU binding.</text>
</comment>
<comment type="subunit">
    <text evidence="1">A double ring-shaped homohexamer of HslV is capped on each side by a ring-shaped HslU homohexamer. The assembly of the HslU/HslV complex is dependent on binding of ATP.</text>
</comment>
<comment type="subcellular location">
    <subcellularLocation>
        <location evidence="1">Cytoplasm</location>
    </subcellularLocation>
</comment>
<comment type="similarity">
    <text evidence="1">Belongs to the peptidase T1B family. HslV subfamily.</text>
</comment>
<gene>
    <name evidence="1" type="primary">hslV</name>
    <name type="ordered locus">TTE1448</name>
</gene>
<evidence type="ECO:0000255" key="1">
    <source>
        <dbReference type="HAMAP-Rule" id="MF_00248"/>
    </source>
</evidence>
<keyword id="KW-0021">Allosteric enzyme</keyword>
<keyword id="KW-0963">Cytoplasm</keyword>
<keyword id="KW-0378">Hydrolase</keyword>
<keyword id="KW-0479">Metal-binding</keyword>
<keyword id="KW-0645">Protease</keyword>
<keyword id="KW-1185">Reference proteome</keyword>
<keyword id="KW-0915">Sodium</keyword>
<keyword id="KW-0888">Threonine protease</keyword>